<comment type="function">
    <text evidence="1">Component of the EKC/KEOPS complex that is required for the formation of a threonylcarbamoyl group on adenosine at position 37 (t(6)A37) in tRNAs that read codons beginning with adenine. The complex is probably involved in the transfer of the threonylcarbamoyl moiety of threonylcarbamoyl-AMP (TC-AMP) to the N6 group of A37. Osgep likely plays a direct catalytic role in this reaction, but requires other protein(s) of the complex to fulfill this activity.</text>
</comment>
<comment type="catalytic activity">
    <reaction evidence="1">
        <text>L-threonylcarbamoyladenylate + adenosine(37) in tRNA = N(6)-L-threonylcarbamoyladenosine(37) in tRNA + AMP + H(+)</text>
        <dbReference type="Rhea" id="RHEA:37059"/>
        <dbReference type="Rhea" id="RHEA-COMP:10162"/>
        <dbReference type="Rhea" id="RHEA-COMP:10163"/>
        <dbReference type="ChEBI" id="CHEBI:15378"/>
        <dbReference type="ChEBI" id="CHEBI:73682"/>
        <dbReference type="ChEBI" id="CHEBI:74411"/>
        <dbReference type="ChEBI" id="CHEBI:74418"/>
        <dbReference type="ChEBI" id="CHEBI:456215"/>
        <dbReference type="EC" id="2.3.1.234"/>
    </reaction>
</comment>
<comment type="cofactor">
    <cofactor evidence="1">
        <name>a divalent metal cation</name>
        <dbReference type="ChEBI" id="CHEBI:60240"/>
    </cofactor>
    <text evidence="1">Binds 1 divalent metal cation per subunit.</text>
</comment>
<comment type="subunit">
    <text evidence="1">Component of the EKC/KEOPS complex; the whole complex dimerizes.</text>
</comment>
<comment type="subcellular location">
    <subcellularLocation>
        <location evidence="1">Cytoplasm</location>
    </subcellularLocation>
    <subcellularLocation>
        <location evidence="1">Nucleus</location>
    </subcellularLocation>
</comment>
<comment type="similarity">
    <text evidence="1">Belongs to the KAE1 / TsaD family.</text>
</comment>
<sequence>MVYIMGFEGSANKLGIGIVKDDGTILSNIRHTFITPPGEGFLPKDTAKHHRSFILSLVEKSLEESKLKPSDIDCLAYTKGPGMGPPLRSVAVTVRMLSQLWDRPIVAVNHCIAHIEMGRLITGAVDPTILYVSGGNTQVISYSLKKYRIFGETIDIAVGNCLDRFARVIQIPNDPSPGYNIEQLAKKGKNLIELPYITKGMDVSFSGILSSIEGMVKNKQNKTQHSVEDLCYSLQEHLFSMLVETAERALAHCGQNEVLAVGGVGCNQRLQEMIQQMISQRNGKSFAIDERYCIDNGAMIAWAGYLIFKNGTTTPLSQTTTTQRFRTDQVDVTWRD</sequence>
<organism>
    <name type="scientific">Dictyostelium discoideum</name>
    <name type="common">Social amoeba</name>
    <dbReference type="NCBI Taxonomy" id="44689"/>
    <lineage>
        <taxon>Eukaryota</taxon>
        <taxon>Amoebozoa</taxon>
        <taxon>Evosea</taxon>
        <taxon>Eumycetozoa</taxon>
        <taxon>Dictyostelia</taxon>
        <taxon>Dictyosteliales</taxon>
        <taxon>Dictyosteliaceae</taxon>
        <taxon>Dictyostelium</taxon>
    </lineage>
</organism>
<name>OSGEP_DICDI</name>
<proteinExistence type="inferred from homology"/>
<evidence type="ECO:0000255" key="1">
    <source>
        <dbReference type="HAMAP-Rule" id="MF_03180"/>
    </source>
</evidence>
<accession>Q55GU1</accession>
<protein>
    <recommendedName>
        <fullName evidence="1">Probable tRNA N6-adenosine threonylcarbamoyltransferase</fullName>
        <ecNumber evidence="1">2.3.1.234</ecNumber>
    </recommendedName>
    <alternativeName>
        <fullName>N6-L-threonylcarbamoyladenine synthase</fullName>
        <shortName>t(6)A synthase</shortName>
    </alternativeName>
    <alternativeName>
        <fullName evidence="1">t(6)A37 threonylcarbamoyladenosine biosynthesis protein osgep</fullName>
    </alternativeName>
    <alternativeName>
        <fullName evidence="1">tRNA threonylcarbamoyladenosine biosynthesis protein osgep</fullName>
    </alternativeName>
</protein>
<keyword id="KW-0012">Acyltransferase</keyword>
<keyword id="KW-0963">Cytoplasm</keyword>
<keyword id="KW-0479">Metal-binding</keyword>
<keyword id="KW-0539">Nucleus</keyword>
<keyword id="KW-1185">Reference proteome</keyword>
<keyword id="KW-0808">Transferase</keyword>
<keyword id="KW-0819">tRNA processing</keyword>
<reference key="1">
    <citation type="journal article" date="2005" name="Nature">
        <title>The genome of the social amoeba Dictyostelium discoideum.</title>
        <authorList>
            <person name="Eichinger L."/>
            <person name="Pachebat J.A."/>
            <person name="Gloeckner G."/>
            <person name="Rajandream M.A."/>
            <person name="Sucgang R."/>
            <person name="Berriman M."/>
            <person name="Song J."/>
            <person name="Olsen R."/>
            <person name="Szafranski K."/>
            <person name="Xu Q."/>
            <person name="Tunggal B."/>
            <person name="Kummerfeld S."/>
            <person name="Madera M."/>
            <person name="Konfortov B.A."/>
            <person name="Rivero F."/>
            <person name="Bankier A.T."/>
            <person name="Lehmann R."/>
            <person name="Hamlin N."/>
            <person name="Davies R."/>
            <person name="Gaudet P."/>
            <person name="Fey P."/>
            <person name="Pilcher K."/>
            <person name="Chen G."/>
            <person name="Saunders D."/>
            <person name="Sodergren E.J."/>
            <person name="Davis P."/>
            <person name="Kerhornou A."/>
            <person name="Nie X."/>
            <person name="Hall N."/>
            <person name="Anjard C."/>
            <person name="Hemphill L."/>
            <person name="Bason N."/>
            <person name="Farbrother P."/>
            <person name="Desany B."/>
            <person name="Just E."/>
            <person name="Morio T."/>
            <person name="Rost R."/>
            <person name="Churcher C.M."/>
            <person name="Cooper J."/>
            <person name="Haydock S."/>
            <person name="van Driessche N."/>
            <person name="Cronin A."/>
            <person name="Goodhead I."/>
            <person name="Muzny D.M."/>
            <person name="Mourier T."/>
            <person name="Pain A."/>
            <person name="Lu M."/>
            <person name="Harper D."/>
            <person name="Lindsay R."/>
            <person name="Hauser H."/>
            <person name="James K.D."/>
            <person name="Quiles M."/>
            <person name="Madan Babu M."/>
            <person name="Saito T."/>
            <person name="Buchrieser C."/>
            <person name="Wardroper A."/>
            <person name="Felder M."/>
            <person name="Thangavelu M."/>
            <person name="Johnson D."/>
            <person name="Knights A."/>
            <person name="Loulseged H."/>
            <person name="Mungall K.L."/>
            <person name="Oliver K."/>
            <person name="Price C."/>
            <person name="Quail M.A."/>
            <person name="Urushihara H."/>
            <person name="Hernandez J."/>
            <person name="Rabbinowitsch E."/>
            <person name="Steffen D."/>
            <person name="Sanders M."/>
            <person name="Ma J."/>
            <person name="Kohara Y."/>
            <person name="Sharp S."/>
            <person name="Simmonds M.N."/>
            <person name="Spiegler S."/>
            <person name="Tivey A."/>
            <person name="Sugano S."/>
            <person name="White B."/>
            <person name="Walker D."/>
            <person name="Woodward J.R."/>
            <person name="Winckler T."/>
            <person name="Tanaka Y."/>
            <person name="Shaulsky G."/>
            <person name="Schleicher M."/>
            <person name="Weinstock G.M."/>
            <person name="Rosenthal A."/>
            <person name="Cox E.C."/>
            <person name="Chisholm R.L."/>
            <person name="Gibbs R.A."/>
            <person name="Loomis W.F."/>
            <person name="Platzer M."/>
            <person name="Kay R.R."/>
            <person name="Williams J.G."/>
            <person name="Dear P.H."/>
            <person name="Noegel A.A."/>
            <person name="Barrell B.G."/>
            <person name="Kuspa A."/>
        </authorList>
    </citation>
    <scope>NUCLEOTIDE SEQUENCE [LARGE SCALE GENOMIC DNA]</scope>
    <source>
        <strain>AX4</strain>
    </source>
</reference>
<gene>
    <name evidence="1" type="primary">osgep</name>
    <name type="ORF">DDB_G0267512</name>
</gene>
<feature type="chain" id="PRO_0000331475" description="Probable tRNA N6-adenosine threonylcarbamoyltransferase">
    <location>
        <begin position="1"/>
        <end position="336"/>
    </location>
</feature>
<feature type="binding site" evidence="1">
    <location>
        <position position="110"/>
    </location>
    <ligand>
        <name>a divalent metal cation</name>
        <dbReference type="ChEBI" id="CHEBI:60240"/>
    </ligand>
</feature>
<feature type="binding site" evidence="1">
    <location>
        <position position="114"/>
    </location>
    <ligand>
        <name>a divalent metal cation</name>
        <dbReference type="ChEBI" id="CHEBI:60240"/>
    </ligand>
</feature>
<feature type="binding site" evidence="1">
    <location>
        <begin position="131"/>
        <end position="135"/>
    </location>
    <ligand>
        <name>substrate</name>
    </ligand>
</feature>
<feature type="binding site" evidence="1">
    <location>
        <position position="131"/>
    </location>
    <ligand>
        <name>a divalent metal cation</name>
        <dbReference type="ChEBI" id="CHEBI:60240"/>
    </ligand>
</feature>
<feature type="binding site" evidence="1">
    <location>
        <position position="163"/>
    </location>
    <ligand>
        <name>substrate</name>
    </ligand>
</feature>
<feature type="binding site" evidence="1">
    <location>
        <position position="178"/>
    </location>
    <ligand>
        <name>substrate</name>
    </ligand>
</feature>
<feature type="binding site" evidence="1">
    <location>
        <position position="182"/>
    </location>
    <ligand>
        <name>substrate</name>
    </ligand>
</feature>
<feature type="binding site" evidence="1">
    <location>
        <position position="267"/>
    </location>
    <ligand>
        <name>substrate</name>
    </ligand>
</feature>
<feature type="binding site" evidence="1">
    <location>
        <position position="295"/>
    </location>
    <ligand>
        <name>a divalent metal cation</name>
        <dbReference type="ChEBI" id="CHEBI:60240"/>
    </ligand>
</feature>
<dbReference type="EC" id="2.3.1.234" evidence="1"/>
<dbReference type="EMBL" id="AAFI02000003">
    <property type="protein sequence ID" value="EAL73209.1"/>
    <property type="molecule type" value="Genomic_DNA"/>
</dbReference>
<dbReference type="RefSeq" id="XP_647093.1">
    <property type="nucleotide sequence ID" value="XM_642001.1"/>
</dbReference>
<dbReference type="SMR" id="Q55GU1"/>
<dbReference type="FunCoup" id="Q55GU1">
    <property type="interactions" value="402"/>
</dbReference>
<dbReference type="STRING" id="44689.Q55GU1"/>
<dbReference type="GlyGen" id="Q55GU1">
    <property type="glycosylation" value="1 site"/>
</dbReference>
<dbReference type="PaxDb" id="44689-DDB0305242"/>
<dbReference type="EnsemblProtists" id="EAL73209">
    <property type="protein sequence ID" value="EAL73209"/>
    <property type="gene ID" value="DDB_G0267512"/>
</dbReference>
<dbReference type="GeneID" id="8615897"/>
<dbReference type="KEGG" id="ddi:DDB_G0267512"/>
<dbReference type="dictyBase" id="DDB_G0267512"/>
<dbReference type="VEuPathDB" id="AmoebaDB:DDB_G0267512"/>
<dbReference type="eggNOG" id="KOG2708">
    <property type="taxonomic scope" value="Eukaryota"/>
</dbReference>
<dbReference type="HOGENOM" id="CLU_023208_2_2_1"/>
<dbReference type="InParanoid" id="Q55GU1"/>
<dbReference type="OMA" id="HHRSWVV"/>
<dbReference type="PhylomeDB" id="Q55GU1"/>
<dbReference type="PRO" id="PR:Q55GU1"/>
<dbReference type="Proteomes" id="UP000002195">
    <property type="component" value="Chromosome 1"/>
</dbReference>
<dbReference type="GO" id="GO:0005737">
    <property type="term" value="C:cytoplasm"/>
    <property type="evidence" value="ECO:0000318"/>
    <property type="project" value="GO_Central"/>
</dbReference>
<dbReference type="GO" id="GO:0000408">
    <property type="term" value="C:EKC/KEOPS complex"/>
    <property type="evidence" value="ECO:0000318"/>
    <property type="project" value="GO_Central"/>
</dbReference>
<dbReference type="GO" id="GO:0005634">
    <property type="term" value="C:nucleus"/>
    <property type="evidence" value="ECO:0007669"/>
    <property type="project" value="UniProtKB-SubCell"/>
</dbReference>
<dbReference type="GO" id="GO:0046872">
    <property type="term" value="F:metal ion binding"/>
    <property type="evidence" value="ECO:0007669"/>
    <property type="project" value="UniProtKB-KW"/>
</dbReference>
<dbReference type="GO" id="GO:0061711">
    <property type="term" value="F:N(6)-L-threonylcarbamoyladenine synthase activity"/>
    <property type="evidence" value="ECO:0007669"/>
    <property type="project" value="UniProtKB-EC"/>
</dbReference>
<dbReference type="GO" id="GO:0002949">
    <property type="term" value="P:tRNA threonylcarbamoyladenosine modification"/>
    <property type="evidence" value="ECO:0007669"/>
    <property type="project" value="UniProtKB-UniRule"/>
</dbReference>
<dbReference type="CDD" id="cd24132">
    <property type="entry name" value="ASKHA_NBD_OSGEP_like_euk"/>
    <property type="match status" value="1"/>
</dbReference>
<dbReference type="FunFam" id="3.30.420.40:FF:000038">
    <property type="entry name" value="Probable tRNA N6-adenosine threonylcarbamoyltransferase"/>
    <property type="match status" value="1"/>
</dbReference>
<dbReference type="FunFam" id="3.30.420.40:FF:000295">
    <property type="entry name" value="Probable tRNA N6-adenosine threonylcarbamoyltransferase"/>
    <property type="match status" value="1"/>
</dbReference>
<dbReference type="Gene3D" id="3.30.420.40">
    <property type="match status" value="2"/>
</dbReference>
<dbReference type="HAMAP" id="MF_01446">
    <property type="entry name" value="Kae1"/>
    <property type="match status" value="1"/>
</dbReference>
<dbReference type="InterPro" id="IPR043129">
    <property type="entry name" value="ATPase_NBD"/>
</dbReference>
<dbReference type="InterPro" id="IPR000905">
    <property type="entry name" value="Gcp-like_dom"/>
</dbReference>
<dbReference type="InterPro" id="IPR017861">
    <property type="entry name" value="KAE1/TsaD"/>
</dbReference>
<dbReference type="InterPro" id="IPR034680">
    <property type="entry name" value="Kae1_archaea_euk"/>
</dbReference>
<dbReference type="NCBIfam" id="TIGR03722">
    <property type="entry name" value="arch_KAE1"/>
    <property type="match status" value="1"/>
</dbReference>
<dbReference type="NCBIfam" id="TIGR00329">
    <property type="entry name" value="gcp_kae1"/>
    <property type="match status" value="1"/>
</dbReference>
<dbReference type="PANTHER" id="PTHR11735">
    <property type="entry name" value="TRNA N6-ADENOSINE THREONYLCARBAMOYLTRANSFERASE"/>
    <property type="match status" value="1"/>
</dbReference>
<dbReference type="PANTHER" id="PTHR11735:SF14">
    <property type="entry name" value="TRNA N6-ADENOSINE THREONYLCARBAMOYLTRANSFERASE"/>
    <property type="match status" value="1"/>
</dbReference>
<dbReference type="Pfam" id="PF00814">
    <property type="entry name" value="TsaD"/>
    <property type="match status" value="1"/>
</dbReference>
<dbReference type="PRINTS" id="PR00789">
    <property type="entry name" value="OSIALOPTASE"/>
</dbReference>
<dbReference type="SUPFAM" id="SSF53067">
    <property type="entry name" value="Actin-like ATPase domain"/>
    <property type="match status" value="1"/>
</dbReference>